<reference key="1">
    <citation type="journal article" date="1997" name="Proc. Natl. Acad. Sci. U.S.A.">
        <title>A novel virus in swine is closely related to the human hepatitis E virus.</title>
        <authorList>
            <person name="Meng X.J."/>
            <person name="Purcell R.H."/>
            <person name="Halbur P.G."/>
            <person name="Lehman J.R."/>
            <person name="Webb D.M."/>
            <person name="Tsareva T.S."/>
            <person name="Haynes J.S."/>
            <person name="Thacker B.J."/>
            <person name="Emerson S.U."/>
        </authorList>
    </citation>
    <scope>NUCLEOTIDE SEQUENCE [GENOMIC RNA]</scope>
</reference>
<reference key="2">
    <citation type="journal article" date="1998" name="J. Virol.">
        <title>Genetic and experimental evidence for cross-species infection by swine hepatitis E virus.</title>
        <authorList>
            <person name="Meng X.J."/>
            <person name="Halbur P.G."/>
            <person name="Shapiro M.S."/>
            <person name="Govindarajan S."/>
            <person name="Bruna J.D."/>
            <person name="Mushahwar I.K."/>
            <person name="Purcell R.H."/>
            <person name="Emerson S.U."/>
        </authorList>
    </citation>
    <scope>NUCLEOTIDE SEQUENCE [GENOMIC RNA]</scope>
</reference>
<reference key="3">
    <citation type="journal article" date="2005" name="J. Virol.">
        <title>Capped RNA transcripts of full-length cDNA clones of swine hepatitis E virus are replication competent when transfected into Huh7 cells and infectious when intrahepatically inoculated into pigs.</title>
        <authorList>
            <person name="Huang Y.W."/>
            <person name="Haqshenas G."/>
            <person name="Kasorndorkbua C."/>
            <person name="Halbur P.G."/>
            <person name="Emerson S.U."/>
            <person name="Meng X.J."/>
        </authorList>
    </citation>
    <scope>NUCLEOTIDE SEQUENCE [GENOMIC RNA]</scope>
    <source>
        <strain>Isolate pSHEV-1</strain>
        <strain>Isolate pSHEV-2</strain>
        <strain>Isolate pSHEV-3</strain>
    </source>
</reference>
<accession>Q6J8F7</accession>
<accession>O36613</accession>
<accession>Q6J8G3</accession>
<evidence type="ECO:0000250" key="1">
    <source>
        <dbReference type="UniProtKB" id="P29326"/>
    </source>
</evidence>
<evidence type="ECO:0000250" key="2">
    <source>
        <dbReference type="UniProtKB" id="P33426"/>
    </source>
</evidence>
<evidence type="ECO:0000250" key="3">
    <source>
        <dbReference type="UniProtKB" id="Q68985"/>
    </source>
</evidence>
<evidence type="ECO:0000250" key="4">
    <source>
        <dbReference type="UniProtKB" id="Q81871"/>
    </source>
</evidence>
<evidence type="ECO:0000250" key="5">
    <source>
        <dbReference type="UniProtKB" id="Q9YLQ9"/>
    </source>
</evidence>
<evidence type="ECO:0000255" key="6"/>
<evidence type="ECO:0000256" key="7">
    <source>
        <dbReference type="SAM" id="MobiDB-lite"/>
    </source>
</evidence>
<evidence type="ECO:0000305" key="8"/>
<proteinExistence type="inferred from homology"/>
<gene>
    <name type="ORF">ORF2</name>
</gene>
<organism>
    <name type="scientific">Hepatitis E virus genotype 3 (isolate Swine/United States/swUS1)</name>
    <name type="common">HEV-3</name>
    <name type="synonym">Hepatitis E virus genotype 3 (isolate Swine/United States/Meng)</name>
    <dbReference type="NCBI Taxonomy" id="512345"/>
    <lineage>
        <taxon>Viruses</taxon>
        <taxon>Riboviria</taxon>
        <taxon>Orthornavirae</taxon>
        <taxon>Kitrinoviricota</taxon>
        <taxon>Alsuviricetes</taxon>
        <taxon>Hepelivirales</taxon>
        <taxon>Hepeviridae</taxon>
        <taxon>Orthohepevirinae</taxon>
        <taxon>Paslahepevirus</taxon>
        <taxon>Hepatitis E virus</taxon>
    </lineage>
</organism>
<organismHost>
    <name type="scientific">Bandicota bengalensis</name>
    <name type="common">lesser bandicoot rat</name>
    <dbReference type="NCBI Taxonomy" id="69079"/>
</organismHost>
<organismHost>
    <name type="scientific">Callithrix</name>
    <dbReference type="NCBI Taxonomy" id="9481"/>
</organismHost>
<organismHost>
    <name type="scientific">Cercopithecus hamlyni</name>
    <name type="common">Owl-faced monkey</name>
    <name type="synonym">Hamlyn's monkey</name>
    <dbReference type="NCBI Taxonomy" id="9536"/>
</organismHost>
<organismHost>
    <name type="scientific">Chlorocebus aethiops</name>
    <name type="common">Green monkey</name>
    <name type="synonym">Cercopithecus aethiops</name>
    <dbReference type="NCBI Taxonomy" id="9534"/>
</organismHost>
<organismHost>
    <name type="scientific">Homo sapiens</name>
    <name type="common">Human</name>
    <dbReference type="NCBI Taxonomy" id="9606"/>
</organismHost>
<organismHost>
    <name type="scientific">Macaca</name>
    <name type="common">macaques</name>
    <dbReference type="NCBI Taxonomy" id="9539"/>
</organismHost>
<organismHost>
    <name type="scientific">Mus musculus</name>
    <name type="common">Mouse</name>
    <dbReference type="NCBI Taxonomy" id="10090"/>
</organismHost>
<organismHost>
    <name type="scientific">Pan troglodytes</name>
    <name type="common">Chimpanzee</name>
    <dbReference type="NCBI Taxonomy" id="9598"/>
</organismHost>
<organismHost>
    <name type="scientific">Saimiri</name>
    <name type="common">squirrel monkeys</name>
    <dbReference type="NCBI Taxonomy" id="9520"/>
</organismHost>
<organismHost>
    <name type="scientific">Sus scrofa</name>
    <name type="common">Pig</name>
    <dbReference type="NCBI Taxonomy" id="9823"/>
</organismHost>
<comment type="function">
    <molecule>Isoform Secreted protein ORF2</molecule>
    <text evidence="5">Plays a role in the inhibition of host antibody-mediated neutralization without blocking viral cell entry.</text>
</comment>
<comment type="function">
    <molecule>Isoform Capsid protein</molecule>
    <text evidence="1 2 4">Forms an icosahedral capsid with a T=1 symmetry and a 34 nm diameter. The capsid is composed of 60 copies linked to each other. Binds to the 5' end of the genomic RNA to mediate genome encapsidation (By similarity). Binds to heparin surface proteoglycans (HSPGs) to mediate viral entry. Additionally, the interactions with host ASGR1 and ASGR2 facilitate viral infection of hepatocytes (By similarity). Inhibits IFN production by blocking host TBK1-induced IRF3 phosphorylation (By similarity). The nuclear form probably modulates host gene expression (By similarity).</text>
</comment>
<comment type="subunit">
    <molecule>Isoform Secreted protein ORF2</molecule>
    <text evidence="5">Homodimer.</text>
</comment>
<comment type="subunit">
    <molecule>Isoform Capsid protein</molecule>
    <text evidence="3 4">Self-assembles to form the capsid. The capsid is dominated by dimers that define the 30 morphological units. Interacts with phosphorylated protein ORF3 (By similarity). Interacts with host TMEM134. Interacts with host ASGR1 and ASGR2; these interactions facilitate infection of host hepatocytes (By similarity).</text>
</comment>
<comment type="subcellular location">
    <molecule>Isoform Secreted protein ORF2</molecule>
    <subcellularLocation>
        <location evidence="4">Secreted</location>
    </subcellularLocation>
    <text evidence="3">Cotranslationally translocated into the ER.</text>
</comment>
<comment type="subcellular location">
    <molecule>Isoform Capsid protein</molecule>
    <subcellularLocation>
        <location evidence="4">Virion</location>
    </subcellularLocation>
    <subcellularLocation>
        <location evidence="4">Host cytoplasm</location>
    </subcellularLocation>
    <subcellularLocation>
        <location evidence="4">Host endoplasmic reticulum</location>
    </subcellularLocation>
    <subcellularLocation>
        <location evidence="4">Host Golgi apparatus</location>
    </subcellularLocation>
    <subcellularLocation>
        <location evidence="3">Host cell surface</location>
    </subcellularLocation>
    <subcellularLocation>
        <location evidence="4">Host nucleus</location>
    </subcellularLocation>
    <text evidence="2 4 5">Translation from the internal AUG codon disrupts the signal sequence, producing a cytoplasmic protein that is responsible for virion assembly (By similarity). Shuttles between cytoplasm and nucleus (By similarity). This isoform is found in quasi-enveloped virions (By similarity).</text>
</comment>
<comment type="alternative products">
    <event type="alternative initiation"/>
    <isoform>
        <id>Q6J8F7-1</id>
        <name>Secreted protein ORF2</name>
        <name>ORF2s</name>
        <name>ORF2g</name>
        <sequence type="displayed"/>
    </isoform>
    <isoform>
        <id>Q6J8F7-2</id>
        <name>Capsid protein</name>
        <name>ORF2c</name>
        <name>ORF2i</name>
        <sequence type="described" ref="VSP_061727"/>
    </isoform>
</comment>
<comment type="domain">
    <text evidence="2">The Arginine-Rich Motif (ARM) acts as a nuclear localization signal that drives the nuclear translocation of isoform capsid protein. This motif has also been linked to the inhibition of host IRF3 phosphorylation.</text>
</comment>
<comment type="PTM">
    <molecule>Pro-secreted protein ORF2</molecule>
    <text evidence="2">Cleaved by host protease in the N-terminus.</text>
</comment>
<comment type="PTM">
    <molecule>Isoform Secreted protein ORF2</molecule>
    <text evidence="4">N-glycosylated.</text>
</comment>
<comment type="PTM">
    <molecule>Isoform Capsid protein</molecule>
    <text evidence="4">Not N-glycosylated. The C-terminus of the capsid protein ORF2 is truncated in non-enveloped virions shedded in feces, probably due to host proteases.</text>
</comment>
<comment type="miscellaneous">
    <text evidence="4">The viral particles present in feces and bile are non-enveloped, while those in circulating blood and culture supernatants are covered with a cellular membrane (quasi-enveloped).</text>
</comment>
<comment type="similarity">
    <text evidence="8">Belongs to the hepevirus capsid protein family.</text>
</comment>
<protein>
    <recommendedName>
        <fullName>Pro-secreted protein ORF2</fullName>
    </recommendedName>
    <alternativeName>
        <fullName>Protein ORF2</fullName>
        <shortName>pORF2</shortName>
    </alternativeName>
    <component>
        <recommendedName>
            <fullName>Secreted protein ORF2</fullName>
            <shortName>ORF2s</shortName>
        </recommendedName>
    </component>
</protein>
<sequence>MRPRAVLLLLFVLLPMLPAPPAGQPSGRRRGRRNGGAGGGFWGDRVDSQPFALPYIHPTNPFAADVVSQPGAGARPRQPPRPLGSAWRDQSQRPSTAPRRRSAPAGAAPLTAVSPAPDTAPVPDVDSRGAILRRQYNLSTSPLTSSVAAGTNLVLYAAPLNPLLPLQDGTNTHIMATEASNYAQYRVVRATIRYRPLVPNAVGGYAISISFWPQTTTTPTSVDMNSITSTDVRILVQPGIASELVIPSERLHYRNQGWRSVETTGVAEEEATSGLVMLCIHGSPVNSYTNTPYTGALGLLDFALELEFRNLTPGNTNTRVSRYTSTARHRLRRGADGTAELTTTAATRFMKDLHFTGTNGVGEVGRGIALTLFNLADTLLGGLPTELISSAGGQLFYSRPVVSANGEPTVKLYTSVENAQQDKGITIPHDIDLGDSRVVIQDYDNQHEQDRPTPSPAPSRPFSVLRANDVLWLSLTAAEYDQTTYGSSTNPMYVSDTVTLVNVATGAQAVARSLDWSKVTLDGRPLTTIQQYSKTFYVLPLRGKLSFWEAGTTKAGYPYNYNTTASDQILIENAAGHRVAISTYTTSLGAGPTSISAVGVLAPHSALAVLEDTVDYPARAHTFDDFCPECRTLGLQGCAFQSTIAELQRLKMKVGKTRES</sequence>
<dbReference type="EMBL" id="AF082843">
    <property type="protein sequence ID" value="AAC97210.1"/>
    <property type="molecule type" value="Genomic_RNA"/>
</dbReference>
<dbReference type="EMBL" id="AY575857">
    <property type="protein sequence ID" value="AAT40995.1"/>
    <property type="molecule type" value="Genomic_RNA"/>
</dbReference>
<dbReference type="EMBL" id="AY575858">
    <property type="protein sequence ID" value="AAT40998.1"/>
    <property type="molecule type" value="Genomic_RNA"/>
</dbReference>
<dbReference type="EMBL" id="AY575859">
    <property type="protein sequence ID" value="AAT41001.1"/>
    <property type="molecule type" value="Genomic_RNA"/>
</dbReference>
<dbReference type="SMR" id="Q6J8F7"/>
<dbReference type="Proteomes" id="UP000001028">
    <property type="component" value="Segment"/>
</dbReference>
<dbReference type="Proteomes" id="UP000008858">
    <property type="component" value="Genome"/>
</dbReference>
<dbReference type="Proteomes" id="UP000008859">
    <property type="component" value="Genome"/>
</dbReference>
<dbReference type="Proteomes" id="UP000008989">
    <property type="component" value="Genome"/>
</dbReference>
<dbReference type="GO" id="GO:0005576">
    <property type="term" value="C:extracellular region"/>
    <property type="evidence" value="ECO:0007669"/>
    <property type="project" value="UniProtKB-SubCell"/>
</dbReference>
<dbReference type="GO" id="GO:0044165">
    <property type="term" value="C:host cell endoplasmic reticulum"/>
    <property type="evidence" value="ECO:0007669"/>
    <property type="project" value="UniProtKB-SubCell"/>
</dbReference>
<dbReference type="GO" id="GO:0044177">
    <property type="term" value="C:host cell Golgi apparatus"/>
    <property type="evidence" value="ECO:0007669"/>
    <property type="project" value="UniProtKB-SubCell"/>
</dbReference>
<dbReference type="GO" id="GO:0042025">
    <property type="term" value="C:host cell nucleus"/>
    <property type="evidence" value="ECO:0007669"/>
    <property type="project" value="UniProtKB-SubCell"/>
</dbReference>
<dbReference type="GO" id="GO:0044228">
    <property type="term" value="C:host cell surface"/>
    <property type="evidence" value="ECO:0007669"/>
    <property type="project" value="UniProtKB-SubCell"/>
</dbReference>
<dbReference type="GO" id="GO:0039615">
    <property type="term" value="C:T=1 icosahedral viral capsid"/>
    <property type="evidence" value="ECO:0007669"/>
    <property type="project" value="UniProtKB-KW"/>
</dbReference>
<dbReference type="GO" id="GO:0003723">
    <property type="term" value="F:RNA binding"/>
    <property type="evidence" value="ECO:0007669"/>
    <property type="project" value="UniProtKB-KW"/>
</dbReference>
<dbReference type="GO" id="GO:0005198">
    <property type="term" value="F:structural molecule activity"/>
    <property type="evidence" value="ECO:0007669"/>
    <property type="project" value="InterPro"/>
</dbReference>
<dbReference type="FunFam" id="2.40.30.190:FF:000001">
    <property type="entry name" value="Secreted protein ORF2"/>
    <property type="match status" value="1"/>
</dbReference>
<dbReference type="FunFam" id="2.60.120.20:FF:000010">
    <property type="entry name" value="Secreted protein ORF2"/>
    <property type="match status" value="1"/>
</dbReference>
<dbReference type="Gene3D" id="2.40.30.190">
    <property type="match status" value="1"/>
</dbReference>
<dbReference type="Gene3D" id="2.60.120.20">
    <property type="match status" value="1"/>
</dbReference>
<dbReference type="InterPro" id="IPR048794">
    <property type="entry name" value="SP2_C"/>
</dbReference>
<dbReference type="InterPro" id="IPR048802">
    <property type="entry name" value="SP2_M"/>
</dbReference>
<dbReference type="InterPro" id="IPR004261">
    <property type="entry name" value="SP2_N"/>
</dbReference>
<dbReference type="InterPro" id="IPR029053">
    <property type="entry name" value="Viral_coat"/>
</dbReference>
<dbReference type="Pfam" id="PF03014">
    <property type="entry name" value="SP2"/>
    <property type="match status" value="1"/>
</dbReference>
<dbReference type="Pfam" id="PF20752">
    <property type="entry name" value="SP2_C"/>
    <property type="match status" value="1"/>
</dbReference>
<dbReference type="Pfam" id="PF20751">
    <property type="entry name" value="SP2_M"/>
    <property type="match status" value="1"/>
</dbReference>
<dbReference type="SUPFAM" id="SSF88633">
    <property type="entry name" value="Positive stranded ssRNA viruses"/>
    <property type="match status" value="1"/>
</dbReference>
<name>CAPSD_HEVMG</name>
<feature type="signal peptide" evidence="6">
    <location>
        <begin position="1"/>
        <end position="23"/>
    </location>
</feature>
<feature type="chain" id="PRO_0000334536" description="Pro-secreted protein ORF2">
    <location>
        <begin position="24"/>
        <end position="660"/>
    </location>
</feature>
<feature type="chain" id="PRO_0000456935" description="Secreted protein ORF2" evidence="2">
    <location>
        <begin position="34"/>
        <end position="660"/>
    </location>
</feature>
<feature type="region of interest" description="Disordered" evidence="7">
    <location>
        <begin position="19"/>
        <end position="43"/>
    </location>
</feature>
<feature type="region of interest" description="Disordered" evidence="7">
    <location>
        <begin position="64"/>
        <end position="125"/>
    </location>
</feature>
<feature type="region of interest" description="particle formation" evidence="1">
    <location>
        <begin position="368"/>
        <end position="394"/>
    </location>
</feature>
<feature type="region of interest" description="Oligomerization" evidence="1">
    <location>
        <begin position="585"/>
        <end position="610"/>
    </location>
</feature>
<feature type="short sequence motif" description="Nuclear localization signal" evidence="2">
    <location>
        <begin position="28"/>
        <end position="33"/>
    </location>
</feature>
<feature type="compositionally biased region" description="Low complexity" evidence="7">
    <location>
        <begin position="93"/>
        <end position="124"/>
    </location>
</feature>
<feature type="site" description="Cleavage" evidence="2">
    <location>
        <begin position="33"/>
        <end position="34"/>
    </location>
</feature>
<feature type="site" description="Possible cleavage" evidence="4">
    <location>
        <begin position="578"/>
        <end position="579"/>
    </location>
</feature>
<feature type="site" description="Possible cleavage" evidence="4">
    <location>
        <begin position="601"/>
        <end position="602"/>
    </location>
</feature>
<feature type="glycosylation site" description="N-linked (GlcNAc...) asparagine; by host" evidence="3">
    <location>
        <position position="137"/>
    </location>
</feature>
<feature type="glycosylation site" description="N-linked (GlcNAc...) asparagine; by host" evidence="3">
    <location>
        <position position="310"/>
    </location>
</feature>
<feature type="glycosylation site" description="N-linked (GlcNAc...) asparagine; by host" evidence="3">
    <location>
        <position position="562"/>
    </location>
</feature>
<feature type="splice variant" id="VSP_061727" description="In isoform Capsid protein.">
    <location>
        <begin position="1"/>
        <end position="15"/>
    </location>
</feature>
<feature type="sequence variant" description="In strain: Isolate pSHEV-1.">
    <original>F</original>
    <variation>L</variation>
    <location>
        <position position="51"/>
    </location>
</feature>
<feature type="sequence variant" description="In strain: Isolate pSHEV-1.">
    <original>T</original>
    <variation>A</variation>
    <location>
        <position position="59"/>
    </location>
</feature>
<feature type="sequence variant" description="In strain: Isolate pSHEV-1.">
    <original>S</original>
    <variation>L</variation>
    <location>
        <position position="390"/>
    </location>
</feature>
<feature type="sequence conflict" description="In Ref. 1 and 2; AAC97210." evidence="8" ref="1 2">
    <original>R</original>
    <variation>C</variation>
    <location>
        <position position="30"/>
    </location>
</feature>
<feature type="sequence conflict" description="In Ref. 1 and 2; AAC97210." evidence="8" ref="1 2">
    <original>A</original>
    <variation>V</variation>
    <location>
        <position position="74"/>
    </location>
</feature>
<keyword id="KW-0024">Alternative initiation</keyword>
<keyword id="KW-0167">Capsid protein</keyword>
<keyword id="KW-0325">Glycoprotein</keyword>
<keyword id="KW-1035">Host cytoplasm</keyword>
<keyword id="KW-1038">Host endoplasmic reticulum</keyword>
<keyword id="KW-1040">Host Golgi apparatus</keyword>
<keyword id="KW-1048">Host nucleus</keyword>
<keyword id="KW-0694">RNA-binding</keyword>
<keyword id="KW-0964">Secreted</keyword>
<keyword id="KW-0732">Signal</keyword>
<keyword id="KW-1140">T=1 icosahedral capsid protein</keyword>
<keyword id="KW-0946">Virion</keyword>